<dbReference type="EMBL" id="CP000964">
    <property type="protein sequence ID" value="ACI09033.1"/>
    <property type="molecule type" value="Genomic_DNA"/>
</dbReference>
<dbReference type="SMR" id="B5XTG6"/>
<dbReference type="KEGG" id="kpe:KPK_0117"/>
<dbReference type="HOGENOM" id="CLU_064548_3_1_6"/>
<dbReference type="Proteomes" id="UP000001734">
    <property type="component" value="Chromosome"/>
</dbReference>
<dbReference type="GO" id="GO:0022625">
    <property type="term" value="C:cytosolic large ribosomal subunit"/>
    <property type="evidence" value="ECO:0007669"/>
    <property type="project" value="TreeGrafter"/>
</dbReference>
<dbReference type="GO" id="GO:0003735">
    <property type="term" value="F:structural constituent of ribosome"/>
    <property type="evidence" value="ECO:0007669"/>
    <property type="project" value="InterPro"/>
</dbReference>
<dbReference type="GO" id="GO:0006412">
    <property type="term" value="P:translation"/>
    <property type="evidence" value="ECO:0007669"/>
    <property type="project" value="UniProtKB-UniRule"/>
</dbReference>
<dbReference type="FunFam" id="2.30.170.40:FF:000001">
    <property type="entry name" value="50S ribosomal protein L28"/>
    <property type="match status" value="1"/>
</dbReference>
<dbReference type="Gene3D" id="2.30.170.40">
    <property type="entry name" value="Ribosomal protein L28/L24"/>
    <property type="match status" value="1"/>
</dbReference>
<dbReference type="HAMAP" id="MF_00373">
    <property type="entry name" value="Ribosomal_bL28"/>
    <property type="match status" value="1"/>
</dbReference>
<dbReference type="InterPro" id="IPR026569">
    <property type="entry name" value="Ribosomal_bL28"/>
</dbReference>
<dbReference type="InterPro" id="IPR034704">
    <property type="entry name" value="Ribosomal_bL28/bL31-like_sf"/>
</dbReference>
<dbReference type="InterPro" id="IPR001383">
    <property type="entry name" value="Ribosomal_bL28_bact-type"/>
</dbReference>
<dbReference type="InterPro" id="IPR037147">
    <property type="entry name" value="Ribosomal_bL28_sf"/>
</dbReference>
<dbReference type="NCBIfam" id="TIGR00009">
    <property type="entry name" value="L28"/>
    <property type="match status" value="1"/>
</dbReference>
<dbReference type="PANTHER" id="PTHR13528">
    <property type="entry name" value="39S RIBOSOMAL PROTEIN L28, MITOCHONDRIAL"/>
    <property type="match status" value="1"/>
</dbReference>
<dbReference type="PANTHER" id="PTHR13528:SF2">
    <property type="entry name" value="LARGE RIBOSOMAL SUBUNIT PROTEIN BL28M"/>
    <property type="match status" value="1"/>
</dbReference>
<dbReference type="Pfam" id="PF00830">
    <property type="entry name" value="Ribosomal_L28"/>
    <property type="match status" value="1"/>
</dbReference>
<dbReference type="SUPFAM" id="SSF143800">
    <property type="entry name" value="L28p-like"/>
    <property type="match status" value="1"/>
</dbReference>
<keyword id="KW-0687">Ribonucleoprotein</keyword>
<keyword id="KW-0689">Ribosomal protein</keyword>
<gene>
    <name evidence="1" type="primary">rpmB</name>
    <name type="ordered locus">KPK_0117</name>
</gene>
<organism>
    <name type="scientific">Klebsiella pneumoniae (strain 342)</name>
    <dbReference type="NCBI Taxonomy" id="507522"/>
    <lineage>
        <taxon>Bacteria</taxon>
        <taxon>Pseudomonadati</taxon>
        <taxon>Pseudomonadota</taxon>
        <taxon>Gammaproteobacteria</taxon>
        <taxon>Enterobacterales</taxon>
        <taxon>Enterobacteriaceae</taxon>
        <taxon>Klebsiella/Raoultella group</taxon>
        <taxon>Klebsiella</taxon>
        <taxon>Klebsiella pneumoniae complex</taxon>
    </lineage>
</organism>
<comment type="similarity">
    <text evidence="1">Belongs to the bacterial ribosomal protein bL28 family.</text>
</comment>
<proteinExistence type="inferred from homology"/>
<name>RL28_KLEP3</name>
<evidence type="ECO:0000255" key="1">
    <source>
        <dbReference type="HAMAP-Rule" id="MF_00373"/>
    </source>
</evidence>
<evidence type="ECO:0000305" key="2"/>
<sequence length="78" mass="9022">MSRVCQVTGKRPVTGNNRSHALNATKRRFLPNLHSHRFWVESEKRFVTLRVSAKGMRVIDKKGIDTVLSELRARGEKY</sequence>
<feature type="chain" id="PRO_1000121646" description="Large ribosomal subunit protein bL28">
    <location>
        <begin position="1"/>
        <end position="78"/>
    </location>
</feature>
<reference key="1">
    <citation type="journal article" date="2008" name="PLoS Genet.">
        <title>Complete genome sequence of the N2-fixing broad host range endophyte Klebsiella pneumoniae 342 and virulence predictions verified in mice.</title>
        <authorList>
            <person name="Fouts D.E."/>
            <person name="Tyler H.L."/>
            <person name="DeBoy R.T."/>
            <person name="Daugherty S."/>
            <person name="Ren Q."/>
            <person name="Badger J.H."/>
            <person name="Durkin A.S."/>
            <person name="Huot H."/>
            <person name="Shrivastava S."/>
            <person name="Kothari S."/>
            <person name="Dodson R.J."/>
            <person name="Mohamoud Y."/>
            <person name="Khouri H."/>
            <person name="Roesch L.F.W."/>
            <person name="Krogfelt K.A."/>
            <person name="Struve C."/>
            <person name="Triplett E.W."/>
            <person name="Methe B.A."/>
        </authorList>
    </citation>
    <scope>NUCLEOTIDE SEQUENCE [LARGE SCALE GENOMIC DNA]</scope>
    <source>
        <strain>342</strain>
    </source>
</reference>
<protein>
    <recommendedName>
        <fullName evidence="1">Large ribosomal subunit protein bL28</fullName>
    </recommendedName>
    <alternativeName>
        <fullName evidence="2">50S ribosomal protein L28</fullName>
    </alternativeName>
</protein>
<accession>B5XTG6</accession>